<reference key="1">
    <citation type="journal article" date="1993" name="Mol. Phylogenet. Evol.">
        <title>Characterization and evolution of the Adh genomic region in Drosophila guanche and Drosophila madeirensis.</title>
        <authorList>
            <person name="Marfany G."/>
            <person name="Gonzalez-Duarte R."/>
        </authorList>
    </citation>
    <scope>NUCLEOTIDE SEQUENCE [GENOMIC DNA]</scope>
</reference>
<gene>
    <name type="primary">Adh</name>
</gene>
<dbReference type="EC" id="1.1.1.1"/>
<dbReference type="EMBL" id="X60113">
    <property type="protein sequence ID" value="CAA42711.1"/>
    <property type="molecule type" value="Genomic_DNA"/>
</dbReference>
<dbReference type="PIR" id="A40731">
    <property type="entry name" value="A40731"/>
</dbReference>
<dbReference type="SMR" id="Q09009"/>
<dbReference type="OrthoDB" id="417891at2759"/>
<dbReference type="GO" id="GO:0005829">
    <property type="term" value="C:cytosol"/>
    <property type="evidence" value="ECO:0007669"/>
    <property type="project" value="TreeGrafter"/>
</dbReference>
<dbReference type="GO" id="GO:0004022">
    <property type="term" value="F:alcohol dehydrogenase (NAD+) activity"/>
    <property type="evidence" value="ECO:0000250"/>
    <property type="project" value="UniProtKB"/>
</dbReference>
<dbReference type="GO" id="GO:0006066">
    <property type="term" value="P:alcohol metabolic process"/>
    <property type="evidence" value="ECO:0007669"/>
    <property type="project" value="InterPro"/>
</dbReference>
<dbReference type="CDD" id="cd05323">
    <property type="entry name" value="ADH_SDR_c_like"/>
    <property type="match status" value="1"/>
</dbReference>
<dbReference type="FunFam" id="3.40.50.720:FF:000302">
    <property type="entry name" value="Alcohol dehydrogenase"/>
    <property type="match status" value="1"/>
</dbReference>
<dbReference type="Gene3D" id="3.40.50.720">
    <property type="entry name" value="NAD(P)-binding Rossmann-like Domain"/>
    <property type="match status" value="1"/>
</dbReference>
<dbReference type="InterPro" id="IPR002425">
    <property type="entry name" value="ADH_Drosophila-type"/>
</dbReference>
<dbReference type="InterPro" id="IPR036291">
    <property type="entry name" value="NAD(P)-bd_dom_sf"/>
</dbReference>
<dbReference type="InterPro" id="IPR020904">
    <property type="entry name" value="Sc_DH/Rdtase_CS"/>
</dbReference>
<dbReference type="InterPro" id="IPR002347">
    <property type="entry name" value="SDR_fam"/>
</dbReference>
<dbReference type="PANTHER" id="PTHR42901">
    <property type="entry name" value="ALCOHOL DEHYDROGENASE"/>
    <property type="match status" value="1"/>
</dbReference>
<dbReference type="PANTHER" id="PTHR42901:SF1">
    <property type="entry name" value="ALCOHOL DEHYDROGENASE"/>
    <property type="match status" value="1"/>
</dbReference>
<dbReference type="Pfam" id="PF00106">
    <property type="entry name" value="adh_short"/>
    <property type="match status" value="1"/>
</dbReference>
<dbReference type="PRINTS" id="PR01168">
    <property type="entry name" value="ALCDHDRGNASE"/>
</dbReference>
<dbReference type="PRINTS" id="PR01167">
    <property type="entry name" value="INSADHFAMILY"/>
</dbReference>
<dbReference type="PRINTS" id="PR00080">
    <property type="entry name" value="SDRFAMILY"/>
</dbReference>
<dbReference type="SUPFAM" id="SSF51735">
    <property type="entry name" value="NAD(P)-binding Rossmann-fold domains"/>
    <property type="match status" value="1"/>
</dbReference>
<dbReference type="PROSITE" id="PS00061">
    <property type="entry name" value="ADH_SHORT"/>
    <property type="match status" value="1"/>
</dbReference>
<accession>Q09009</accession>
<name>ADH_DROGU</name>
<proteinExistence type="inferred from homology"/>
<feature type="initiator methionine" description="Removed" evidence="1">
    <location>
        <position position="1"/>
    </location>
</feature>
<feature type="chain" id="PRO_0000054463" description="Alcohol dehydrogenase">
    <location>
        <begin position="2"/>
        <end position="254"/>
    </location>
</feature>
<feature type="active site" description="Proton acceptor" evidence="2">
    <location>
        <position position="151"/>
    </location>
</feature>
<feature type="binding site" evidence="1">
    <location>
        <begin position="10"/>
        <end position="33"/>
    </location>
    <ligand>
        <name>NAD(+)</name>
        <dbReference type="ChEBI" id="CHEBI:57540"/>
    </ligand>
</feature>
<feature type="binding site" evidence="1">
    <location>
        <position position="138"/>
    </location>
    <ligand>
        <name>substrate</name>
    </ligand>
</feature>
<protein>
    <recommendedName>
        <fullName>Alcohol dehydrogenase</fullName>
        <ecNumber>1.1.1.1</ecNumber>
    </recommendedName>
</protein>
<keyword id="KW-0520">NAD</keyword>
<keyword id="KW-0560">Oxidoreductase</keyword>
<organism>
    <name type="scientific">Drosophila guanche</name>
    <name type="common">Fruit fly</name>
    <dbReference type="NCBI Taxonomy" id="7266"/>
    <lineage>
        <taxon>Eukaryota</taxon>
        <taxon>Metazoa</taxon>
        <taxon>Ecdysozoa</taxon>
        <taxon>Arthropoda</taxon>
        <taxon>Hexapoda</taxon>
        <taxon>Insecta</taxon>
        <taxon>Pterygota</taxon>
        <taxon>Neoptera</taxon>
        <taxon>Endopterygota</taxon>
        <taxon>Diptera</taxon>
        <taxon>Brachycera</taxon>
        <taxon>Muscomorpha</taxon>
        <taxon>Ephydroidea</taxon>
        <taxon>Drosophilidae</taxon>
        <taxon>Drosophila</taxon>
        <taxon>Sophophora</taxon>
    </lineage>
</organism>
<evidence type="ECO:0000250" key="1"/>
<evidence type="ECO:0000255" key="2">
    <source>
        <dbReference type="PROSITE-ProRule" id="PRU10001"/>
    </source>
</evidence>
<evidence type="ECO:0000305" key="3"/>
<sequence>MSLTNKNVVFVAGLGGIGLDTSRELVKRDLKNLVILDRIDNPAAIAELKAVNPKVTVTFYPYDVTVPVAETTKLLKTIFAQIKTIDVLINGAGILDDHQIERTIAVNYTGLVNTTTAILDFWDKRKGGPGGIICNIGSVTGFNAIYQVPVYSGSKAAVVNFTSSLAKLAPITGVTAYTVNPGITKTTLVHKFNSWLDVEPRVAEKLLEHPTQTSQQCAENFVKAIELNKNGAIWKLDLGTLEPITWTKHWDSGI</sequence>
<comment type="catalytic activity">
    <reaction evidence="2">
        <text>a primary alcohol + NAD(+) = an aldehyde + NADH + H(+)</text>
        <dbReference type="Rhea" id="RHEA:10736"/>
        <dbReference type="ChEBI" id="CHEBI:15378"/>
        <dbReference type="ChEBI" id="CHEBI:15734"/>
        <dbReference type="ChEBI" id="CHEBI:17478"/>
        <dbReference type="ChEBI" id="CHEBI:57540"/>
        <dbReference type="ChEBI" id="CHEBI:57945"/>
        <dbReference type="EC" id="1.1.1.1"/>
    </reaction>
</comment>
<comment type="catalytic activity">
    <reaction evidence="2">
        <text>a secondary alcohol + NAD(+) = a ketone + NADH + H(+)</text>
        <dbReference type="Rhea" id="RHEA:10740"/>
        <dbReference type="ChEBI" id="CHEBI:15378"/>
        <dbReference type="ChEBI" id="CHEBI:17087"/>
        <dbReference type="ChEBI" id="CHEBI:35681"/>
        <dbReference type="ChEBI" id="CHEBI:57540"/>
        <dbReference type="ChEBI" id="CHEBI:57945"/>
        <dbReference type="EC" id="1.1.1.1"/>
    </reaction>
</comment>
<comment type="subunit">
    <text>Homodimer.</text>
</comment>
<comment type="similarity">
    <text evidence="3">Belongs to the short-chain dehydrogenases/reductases (SDR) family.</text>
</comment>